<proteinExistence type="predicted"/>
<accession>Q9ZD94</accession>
<reference key="1">
    <citation type="journal article" date="1998" name="Nature">
        <title>The genome sequence of Rickettsia prowazekii and the origin of mitochondria.</title>
        <authorList>
            <person name="Andersson S.G.E."/>
            <person name="Zomorodipour A."/>
            <person name="Andersson J.O."/>
            <person name="Sicheritz-Ponten T."/>
            <person name="Alsmark U.C.M."/>
            <person name="Podowski R.M."/>
            <person name="Naeslund A.K."/>
            <person name="Eriksson A.-S."/>
            <person name="Winkler H.H."/>
            <person name="Kurland C.G."/>
        </authorList>
    </citation>
    <scope>NUCLEOTIDE SEQUENCE [LARGE SCALE GENOMIC DNA]</scope>
    <source>
        <strain>Madrid E</strain>
    </source>
</reference>
<organism>
    <name type="scientific">Rickettsia prowazekii (strain Madrid E)</name>
    <dbReference type="NCBI Taxonomy" id="272947"/>
    <lineage>
        <taxon>Bacteria</taxon>
        <taxon>Pseudomonadati</taxon>
        <taxon>Pseudomonadota</taxon>
        <taxon>Alphaproteobacteria</taxon>
        <taxon>Rickettsiales</taxon>
        <taxon>Rickettsiaceae</taxon>
        <taxon>Rickettsieae</taxon>
        <taxon>Rickettsia</taxon>
        <taxon>typhus group</taxon>
    </lineage>
</organism>
<feature type="chain" id="PRO_0000101373" description="Uncharacterized protein RP448">
    <location>
        <begin position="1"/>
        <end position="454"/>
    </location>
</feature>
<sequence length="454" mass="51212">MSEIITNINDSIEKIKKIEEITEISAAVQGKIIDIKNVDSRLDTLNKNIVILDPIQQYLQSEEYIISTLEVLASHIISEVVENKDVQKLVDNLHINLEQITKLIPSAADKLKFDIARAEAALKGFVLPLNNGGPFDELSLMGIKDKEEIFAGPIRATKKALIAISGNSIPKEQYANAIKDKAMEILKQDPNNTPDKLEQYEKFIIQGDKNQKFNKDSNQFIPRVNKLSQIEFKELQKAATDTVHKISSRLEKNNSISKQLEQIVLIANSSGIKKSKVIIKKLNKLDSTYLSENSTKIATALKDINDKGASLWEKFKQIFTGRNYLEERLSQLVDKHITLSDGYVVKTINDRIFSNALTNPEIAVGLTKFLNKNKDKVTTNPEFKNLIPITGEHIIVQPQQVNNLNLAELRKINPITFDKTIFEDSIKLRNSNRKYPQTTPNIATKNQEAVRSKG</sequence>
<dbReference type="EMBL" id="AJ235271">
    <property type="protein sequence ID" value="CAA14905.1"/>
    <property type="molecule type" value="Genomic_DNA"/>
</dbReference>
<dbReference type="PIR" id="G71703">
    <property type="entry name" value="G71703"/>
</dbReference>
<dbReference type="RefSeq" id="NP_220829.1">
    <property type="nucleotide sequence ID" value="NC_000963.1"/>
</dbReference>
<dbReference type="RefSeq" id="WP_004597673.1">
    <property type="nucleotide sequence ID" value="NC_000963.1"/>
</dbReference>
<dbReference type="SMR" id="Q9ZD94"/>
<dbReference type="EnsemblBacteria" id="CAA14905">
    <property type="protein sequence ID" value="CAA14905"/>
    <property type="gene ID" value="CAA14905"/>
</dbReference>
<dbReference type="KEGG" id="rpr:RP448"/>
<dbReference type="PATRIC" id="fig|272947.5.peg.461"/>
<dbReference type="HOGENOM" id="CLU_602531_0_0_5"/>
<dbReference type="OrthoDB" id="7160645at2"/>
<dbReference type="Proteomes" id="UP000002480">
    <property type="component" value="Chromosome"/>
</dbReference>
<keyword id="KW-1185">Reference proteome</keyword>
<name>Y448_RICPR</name>
<gene>
    <name type="ordered locus">RP448</name>
</gene>
<protein>
    <recommendedName>
        <fullName>Uncharacterized protein RP448</fullName>
    </recommendedName>
</protein>